<sequence length="404" mass="45002">MSVGMAAPRAAFACDPDASRGRLFDELPSKTRSPFRRDCDRVIHSTGFRRLKHKTQVFVYHEGDHYRTRLTHSLEVAQIARAIARQLGLDEDLTEALALAHDLGHPPFGHAGERALDACLQRYGGFDHNAQSLRVVTALEHRYPEFNGLNLTWETLEGIVKHNGPLTDRSGAPLGRYQAHGVPTGIVEFNRCFDLELWSHASLEAQVAGIADDIAYDAHDIDDGLRAGLFGVDDLGEMPLTAQMTAAIDVRYPGLDPARRGAELVRELISFLIGAAVAEAERRLIAAQPASVQAVREAGQDLIMFAPDAAEAEALIKAFLKRHMYRHPRVMRVMDDAETVVFELFARYRDHPADLPAEWLPANAGQGETEADRLRRICNFIAGMTDRYALTEHQRLFDLTPELR</sequence>
<proteinExistence type="inferred from homology"/>
<feature type="chain" id="PRO_1000066435" description="Deoxyguanosinetriphosphate triphosphohydrolase-like protein">
    <location>
        <begin position="1"/>
        <end position="404"/>
    </location>
</feature>
<feature type="domain" description="HD" evidence="2">
    <location>
        <begin position="69"/>
        <end position="217"/>
    </location>
</feature>
<name>DGTL1_RHOPB</name>
<keyword id="KW-0378">Hydrolase</keyword>
<comment type="similarity">
    <text evidence="1">Belongs to the dGTPase family. Type 2 subfamily.</text>
</comment>
<protein>
    <recommendedName>
        <fullName evidence="1">Deoxyguanosinetriphosphate triphosphohydrolase-like protein</fullName>
    </recommendedName>
</protein>
<evidence type="ECO:0000255" key="1">
    <source>
        <dbReference type="HAMAP-Rule" id="MF_01212"/>
    </source>
</evidence>
<evidence type="ECO:0000255" key="2">
    <source>
        <dbReference type="PROSITE-ProRule" id="PRU01175"/>
    </source>
</evidence>
<reference key="1">
    <citation type="submission" date="2006-03" db="EMBL/GenBank/DDBJ databases">
        <title>Complete sequence of Rhodopseudomonas palustris BisB18.</title>
        <authorList>
            <consortium name="US DOE Joint Genome Institute"/>
            <person name="Copeland A."/>
            <person name="Lucas S."/>
            <person name="Lapidus A."/>
            <person name="Barry K."/>
            <person name="Detter J.C."/>
            <person name="Glavina del Rio T."/>
            <person name="Hammon N."/>
            <person name="Israni S."/>
            <person name="Dalin E."/>
            <person name="Tice H."/>
            <person name="Pitluck S."/>
            <person name="Chain P."/>
            <person name="Malfatti S."/>
            <person name="Shin M."/>
            <person name="Vergez L."/>
            <person name="Schmutz J."/>
            <person name="Larimer F."/>
            <person name="Land M."/>
            <person name="Hauser L."/>
            <person name="Pelletier D.A."/>
            <person name="Kyrpides N."/>
            <person name="Anderson I."/>
            <person name="Oda Y."/>
            <person name="Harwood C.S."/>
            <person name="Richardson P."/>
        </authorList>
    </citation>
    <scope>NUCLEOTIDE SEQUENCE [LARGE SCALE GENOMIC DNA]</scope>
    <source>
        <strain>BisB18</strain>
    </source>
</reference>
<organism>
    <name type="scientific">Rhodopseudomonas palustris (strain BisB18)</name>
    <dbReference type="NCBI Taxonomy" id="316056"/>
    <lineage>
        <taxon>Bacteria</taxon>
        <taxon>Pseudomonadati</taxon>
        <taxon>Pseudomonadota</taxon>
        <taxon>Alphaproteobacteria</taxon>
        <taxon>Hyphomicrobiales</taxon>
        <taxon>Nitrobacteraceae</taxon>
        <taxon>Rhodopseudomonas</taxon>
    </lineage>
</organism>
<dbReference type="EMBL" id="CP000301">
    <property type="protein sequence ID" value="ABD88058.1"/>
    <property type="molecule type" value="Genomic_DNA"/>
</dbReference>
<dbReference type="SMR" id="Q214X8"/>
<dbReference type="STRING" id="316056.RPC_2507"/>
<dbReference type="KEGG" id="rpc:RPC_2507"/>
<dbReference type="eggNOG" id="COG0232">
    <property type="taxonomic scope" value="Bacteria"/>
</dbReference>
<dbReference type="HOGENOM" id="CLU_028163_1_0_5"/>
<dbReference type="GO" id="GO:0008832">
    <property type="term" value="F:dGTPase activity"/>
    <property type="evidence" value="ECO:0007669"/>
    <property type="project" value="TreeGrafter"/>
</dbReference>
<dbReference type="GO" id="GO:0006203">
    <property type="term" value="P:dGTP catabolic process"/>
    <property type="evidence" value="ECO:0007669"/>
    <property type="project" value="TreeGrafter"/>
</dbReference>
<dbReference type="CDD" id="cd00077">
    <property type="entry name" value="HDc"/>
    <property type="match status" value="1"/>
</dbReference>
<dbReference type="Gene3D" id="1.10.3210.10">
    <property type="entry name" value="Hypothetical protein af1432"/>
    <property type="match status" value="1"/>
</dbReference>
<dbReference type="HAMAP" id="MF_01212">
    <property type="entry name" value="dGTPase_type2"/>
    <property type="match status" value="1"/>
</dbReference>
<dbReference type="InterPro" id="IPR006261">
    <property type="entry name" value="dGTPase"/>
</dbReference>
<dbReference type="InterPro" id="IPR050135">
    <property type="entry name" value="dGTPase-like"/>
</dbReference>
<dbReference type="InterPro" id="IPR023023">
    <property type="entry name" value="dNTPase_2"/>
</dbReference>
<dbReference type="InterPro" id="IPR003607">
    <property type="entry name" value="HD/PDEase_dom"/>
</dbReference>
<dbReference type="InterPro" id="IPR006674">
    <property type="entry name" value="HD_domain"/>
</dbReference>
<dbReference type="InterPro" id="IPR026875">
    <property type="entry name" value="PHydrolase_assoc_dom"/>
</dbReference>
<dbReference type="NCBIfam" id="TIGR01353">
    <property type="entry name" value="dGTP_triPase"/>
    <property type="match status" value="1"/>
</dbReference>
<dbReference type="NCBIfam" id="NF002326">
    <property type="entry name" value="PRK01286.1-1"/>
    <property type="match status" value="1"/>
</dbReference>
<dbReference type="NCBIfam" id="NF002328">
    <property type="entry name" value="PRK01286.1-3"/>
    <property type="match status" value="1"/>
</dbReference>
<dbReference type="PANTHER" id="PTHR11373:SF43">
    <property type="entry name" value="DEOXYGUANOSINETRIPHOSPHATE TRIPHOSPHOHYDROLASE-LIKE PROTEIN"/>
    <property type="match status" value="1"/>
</dbReference>
<dbReference type="PANTHER" id="PTHR11373">
    <property type="entry name" value="DEOXYNUCLEOSIDE TRIPHOSPHATE TRIPHOSPHOHYDROLASE"/>
    <property type="match status" value="1"/>
</dbReference>
<dbReference type="Pfam" id="PF01966">
    <property type="entry name" value="HD"/>
    <property type="match status" value="1"/>
</dbReference>
<dbReference type="Pfam" id="PF13286">
    <property type="entry name" value="HD_assoc"/>
    <property type="match status" value="1"/>
</dbReference>
<dbReference type="SMART" id="SM00471">
    <property type="entry name" value="HDc"/>
    <property type="match status" value="1"/>
</dbReference>
<dbReference type="SUPFAM" id="SSF109604">
    <property type="entry name" value="HD-domain/PDEase-like"/>
    <property type="match status" value="1"/>
</dbReference>
<dbReference type="PROSITE" id="PS51831">
    <property type="entry name" value="HD"/>
    <property type="match status" value="1"/>
</dbReference>
<gene>
    <name type="ordered locus">RPC_2507</name>
</gene>
<accession>Q214X8</accession>